<comment type="function">
    <text evidence="1">NDH-1 shuttles electrons from NADH, via FMN and iron-sulfur (Fe-S) centers, to quinones in the respiratory chain. The immediate electron acceptor for the enzyme in this species is believed to be ubiquinone. Couples the redox reaction to proton translocation (for every two electrons transferred, four hydrogen ions are translocated across the cytoplasmic membrane), and thus conserves the redox energy in a proton gradient.</text>
</comment>
<comment type="catalytic activity">
    <reaction evidence="1">
        <text>a quinone + NADH + 5 H(+)(in) = a quinol + NAD(+) + 4 H(+)(out)</text>
        <dbReference type="Rhea" id="RHEA:57888"/>
        <dbReference type="ChEBI" id="CHEBI:15378"/>
        <dbReference type="ChEBI" id="CHEBI:24646"/>
        <dbReference type="ChEBI" id="CHEBI:57540"/>
        <dbReference type="ChEBI" id="CHEBI:57945"/>
        <dbReference type="ChEBI" id="CHEBI:132124"/>
    </reaction>
</comment>
<comment type="cofactor">
    <cofactor evidence="1">
        <name>[4Fe-4S] cluster</name>
        <dbReference type="ChEBI" id="CHEBI:49883"/>
    </cofactor>
    <text evidence="1">Binds 2 [4Fe-4S] clusters per subunit.</text>
</comment>
<comment type="subunit">
    <text evidence="1">NDH-1 is composed of 14 different subunits. Subunits NuoA, H, J, K, L, M, N constitute the membrane sector of the complex.</text>
</comment>
<comment type="subcellular location">
    <subcellularLocation>
        <location evidence="1">Cell inner membrane</location>
        <topology evidence="1">Peripheral membrane protein</topology>
    </subcellularLocation>
</comment>
<comment type="similarity">
    <text evidence="1">Belongs to the complex I 23 kDa subunit family.</text>
</comment>
<name>NUOI_BURCJ</name>
<organism>
    <name type="scientific">Burkholderia cenocepacia (strain ATCC BAA-245 / DSM 16553 / LMG 16656 / NCTC 13227 / J2315 / CF5610)</name>
    <name type="common">Burkholderia cepacia (strain J2315)</name>
    <dbReference type="NCBI Taxonomy" id="216591"/>
    <lineage>
        <taxon>Bacteria</taxon>
        <taxon>Pseudomonadati</taxon>
        <taxon>Pseudomonadota</taxon>
        <taxon>Betaproteobacteria</taxon>
        <taxon>Burkholderiales</taxon>
        <taxon>Burkholderiaceae</taxon>
        <taxon>Burkholderia</taxon>
        <taxon>Burkholderia cepacia complex</taxon>
    </lineage>
</organism>
<keyword id="KW-0004">4Fe-4S</keyword>
<keyword id="KW-0997">Cell inner membrane</keyword>
<keyword id="KW-1003">Cell membrane</keyword>
<keyword id="KW-0408">Iron</keyword>
<keyword id="KW-0411">Iron-sulfur</keyword>
<keyword id="KW-0472">Membrane</keyword>
<keyword id="KW-0479">Metal-binding</keyword>
<keyword id="KW-0520">NAD</keyword>
<keyword id="KW-0874">Quinone</keyword>
<keyword id="KW-0677">Repeat</keyword>
<keyword id="KW-1278">Translocase</keyword>
<keyword id="KW-0830">Ubiquinone</keyword>
<gene>
    <name evidence="1" type="primary">nuoI</name>
    <name type="ordered locus">BceJ2315_22960</name>
    <name type="ORF">BCAL2336</name>
</gene>
<accession>B4E5L4</accession>
<feature type="chain" id="PRO_1000143636" description="NADH-quinone oxidoreductase subunit I">
    <location>
        <begin position="1"/>
        <end position="162"/>
    </location>
</feature>
<feature type="domain" description="4Fe-4S ferredoxin-type 1" evidence="1">
    <location>
        <begin position="54"/>
        <end position="83"/>
    </location>
</feature>
<feature type="domain" description="4Fe-4S ferredoxin-type 2" evidence="1">
    <location>
        <begin position="93"/>
        <end position="122"/>
    </location>
</feature>
<feature type="binding site" evidence="1">
    <location>
        <position position="63"/>
    </location>
    <ligand>
        <name>[4Fe-4S] cluster</name>
        <dbReference type="ChEBI" id="CHEBI:49883"/>
        <label>1</label>
    </ligand>
</feature>
<feature type="binding site" evidence="1">
    <location>
        <position position="66"/>
    </location>
    <ligand>
        <name>[4Fe-4S] cluster</name>
        <dbReference type="ChEBI" id="CHEBI:49883"/>
        <label>1</label>
    </ligand>
</feature>
<feature type="binding site" evidence="1">
    <location>
        <position position="69"/>
    </location>
    <ligand>
        <name>[4Fe-4S] cluster</name>
        <dbReference type="ChEBI" id="CHEBI:49883"/>
        <label>1</label>
    </ligand>
</feature>
<feature type="binding site" evidence="1">
    <location>
        <position position="73"/>
    </location>
    <ligand>
        <name>[4Fe-4S] cluster</name>
        <dbReference type="ChEBI" id="CHEBI:49883"/>
        <label>2</label>
    </ligand>
</feature>
<feature type="binding site" evidence="1">
    <location>
        <position position="102"/>
    </location>
    <ligand>
        <name>[4Fe-4S] cluster</name>
        <dbReference type="ChEBI" id="CHEBI:49883"/>
        <label>2</label>
    </ligand>
</feature>
<feature type="binding site" evidence="1">
    <location>
        <position position="105"/>
    </location>
    <ligand>
        <name>[4Fe-4S] cluster</name>
        <dbReference type="ChEBI" id="CHEBI:49883"/>
        <label>2</label>
    </ligand>
</feature>
<feature type="binding site" evidence="1">
    <location>
        <position position="108"/>
    </location>
    <ligand>
        <name>[4Fe-4S] cluster</name>
        <dbReference type="ChEBI" id="CHEBI:49883"/>
        <label>2</label>
    </ligand>
</feature>
<feature type="binding site" evidence="1">
    <location>
        <position position="112"/>
    </location>
    <ligand>
        <name>[4Fe-4S] cluster</name>
        <dbReference type="ChEBI" id="CHEBI:49883"/>
        <label>1</label>
    </ligand>
</feature>
<proteinExistence type="inferred from homology"/>
<dbReference type="EC" id="7.1.1.-" evidence="1"/>
<dbReference type="EMBL" id="AM747720">
    <property type="protein sequence ID" value="CAR52637.1"/>
    <property type="molecule type" value="Genomic_DNA"/>
</dbReference>
<dbReference type="RefSeq" id="WP_006484869.1">
    <property type="nucleotide sequence ID" value="NC_011000.1"/>
</dbReference>
<dbReference type="SMR" id="B4E5L4"/>
<dbReference type="GeneID" id="56558833"/>
<dbReference type="KEGG" id="bcj:BCAL2336"/>
<dbReference type="eggNOG" id="COG1143">
    <property type="taxonomic scope" value="Bacteria"/>
</dbReference>
<dbReference type="HOGENOM" id="CLU_067218_5_1_4"/>
<dbReference type="BioCyc" id="BCEN216591:G1G1V-2579-MONOMER"/>
<dbReference type="Proteomes" id="UP000001035">
    <property type="component" value="Chromosome 1"/>
</dbReference>
<dbReference type="GO" id="GO:0005886">
    <property type="term" value="C:plasma membrane"/>
    <property type="evidence" value="ECO:0007669"/>
    <property type="project" value="UniProtKB-SubCell"/>
</dbReference>
<dbReference type="GO" id="GO:0051539">
    <property type="term" value="F:4 iron, 4 sulfur cluster binding"/>
    <property type="evidence" value="ECO:0007669"/>
    <property type="project" value="UniProtKB-KW"/>
</dbReference>
<dbReference type="GO" id="GO:0005506">
    <property type="term" value="F:iron ion binding"/>
    <property type="evidence" value="ECO:0007669"/>
    <property type="project" value="UniProtKB-UniRule"/>
</dbReference>
<dbReference type="GO" id="GO:0050136">
    <property type="term" value="F:NADH:ubiquinone reductase (non-electrogenic) activity"/>
    <property type="evidence" value="ECO:0007669"/>
    <property type="project" value="UniProtKB-UniRule"/>
</dbReference>
<dbReference type="GO" id="GO:0048038">
    <property type="term" value="F:quinone binding"/>
    <property type="evidence" value="ECO:0007669"/>
    <property type="project" value="UniProtKB-KW"/>
</dbReference>
<dbReference type="GO" id="GO:0009060">
    <property type="term" value="P:aerobic respiration"/>
    <property type="evidence" value="ECO:0007669"/>
    <property type="project" value="TreeGrafter"/>
</dbReference>
<dbReference type="FunFam" id="3.30.70.3270:FF:000003">
    <property type="entry name" value="NADH-quinone oxidoreductase subunit I"/>
    <property type="match status" value="1"/>
</dbReference>
<dbReference type="Gene3D" id="3.30.70.3270">
    <property type="match status" value="1"/>
</dbReference>
<dbReference type="HAMAP" id="MF_01351">
    <property type="entry name" value="NDH1_NuoI"/>
    <property type="match status" value="1"/>
</dbReference>
<dbReference type="InterPro" id="IPR017896">
    <property type="entry name" value="4Fe4S_Fe-S-bd"/>
</dbReference>
<dbReference type="InterPro" id="IPR017900">
    <property type="entry name" value="4Fe4S_Fe_S_CS"/>
</dbReference>
<dbReference type="InterPro" id="IPR010226">
    <property type="entry name" value="NADH_quinone_OxRdtase_chainI"/>
</dbReference>
<dbReference type="NCBIfam" id="TIGR01971">
    <property type="entry name" value="NuoI"/>
    <property type="match status" value="1"/>
</dbReference>
<dbReference type="NCBIfam" id="NF004538">
    <property type="entry name" value="PRK05888.1-4"/>
    <property type="match status" value="1"/>
</dbReference>
<dbReference type="NCBIfam" id="NF004539">
    <property type="entry name" value="PRK05888.1-5"/>
    <property type="match status" value="1"/>
</dbReference>
<dbReference type="PANTHER" id="PTHR10849:SF20">
    <property type="entry name" value="NADH DEHYDROGENASE [UBIQUINONE] IRON-SULFUR PROTEIN 8, MITOCHONDRIAL"/>
    <property type="match status" value="1"/>
</dbReference>
<dbReference type="PANTHER" id="PTHR10849">
    <property type="entry name" value="NADH DEHYDROGENASE UBIQUINONE IRON-SULFUR PROTEIN 8, MITOCHONDRIAL"/>
    <property type="match status" value="1"/>
</dbReference>
<dbReference type="Pfam" id="PF12838">
    <property type="entry name" value="Fer4_7"/>
    <property type="match status" value="1"/>
</dbReference>
<dbReference type="SUPFAM" id="SSF54862">
    <property type="entry name" value="4Fe-4S ferredoxins"/>
    <property type="match status" value="1"/>
</dbReference>
<dbReference type="PROSITE" id="PS00198">
    <property type="entry name" value="4FE4S_FER_1"/>
    <property type="match status" value="2"/>
</dbReference>
<dbReference type="PROSITE" id="PS51379">
    <property type="entry name" value="4FE4S_FER_2"/>
    <property type="match status" value="2"/>
</dbReference>
<reference key="1">
    <citation type="journal article" date="2009" name="J. Bacteriol.">
        <title>The genome of Burkholderia cenocepacia J2315, an epidemic pathogen of cystic fibrosis patients.</title>
        <authorList>
            <person name="Holden M.T."/>
            <person name="Seth-Smith H.M."/>
            <person name="Crossman L.C."/>
            <person name="Sebaihia M."/>
            <person name="Bentley S.D."/>
            <person name="Cerdeno-Tarraga A.M."/>
            <person name="Thomson N.R."/>
            <person name="Bason N."/>
            <person name="Quail M.A."/>
            <person name="Sharp S."/>
            <person name="Cherevach I."/>
            <person name="Churcher C."/>
            <person name="Goodhead I."/>
            <person name="Hauser H."/>
            <person name="Holroyd N."/>
            <person name="Mungall K."/>
            <person name="Scott P."/>
            <person name="Walker D."/>
            <person name="White B."/>
            <person name="Rose H."/>
            <person name="Iversen P."/>
            <person name="Mil-Homens D."/>
            <person name="Rocha E.P."/>
            <person name="Fialho A.M."/>
            <person name="Baldwin A."/>
            <person name="Dowson C."/>
            <person name="Barrell B.G."/>
            <person name="Govan J.R."/>
            <person name="Vandamme P."/>
            <person name="Hart C.A."/>
            <person name="Mahenthiralingam E."/>
            <person name="Parkhill J."/>
        </authorList>
    </citation>
    <scope>NUCLEOTIDE SEQUENCE [LARGE SCALE GENOMIC DNA]</scope>
    <source>
        <strain>ATCC BAA-245 / DSM 16553 / LMG 16656 / NCTC 13227 / J2315 / CF5610</strain>
    </source>
</reference>
<evidence type="ECO:0000255" key="1">
    <source>
        <dbReference type="HAMAP-Rule" id="MF_01351"/>
    </source>
</evidence>
<protein>
    <recommendedName>
        <fullName evidence="1">NADH-quinone oxidoreductase subunit I</fullName>
        <ecNumber evidence="1">7.1.1.-</ecNumber>
    </recommendedName>
    <alternativeName>
        <fullName evidence="1">NADH dehydrogenase I subunit I</fullName>
    </alternativeName>
    <alternativeName>
        <fullName evidence="1">NDH-1 subunit I</fullName>
    </alternativeName>
</protein>
<sequence>MTAIQHFFKTFFLTELLKGLALTGRYTFKRKFTVQFPEEKTPISPRFRGLHALRRYENGEERCIACKLCEAVCPALAITIESETRADNTRRTTRYDIDLTKCIFCGFCEESCPVDSIVETQILEYHGEKRGDLYFTKDMLLAVGDRYEKDIAAAKAADAPYR</sequence>